<protein>
    <recommendedName>
        <fullName evidence="1">NAD(P)H-quinone oxidoreductase subunit 3, chloroplastic</fullName>
        <ecNumber evidence="1">7.1.1.-</ecNumber>
    </recommendedName>
    <alternativeName>
        <fullName evidence="1">NAD(P)H dehydrogenase subunit 3</fullName>
    </alternativeName>
    <alternativeName>
        <fullName evidence="1">NADH-plastoquinone oxidoreductase subunit 3</fullName>
    </alternativeName>
</protein>
<keyword id="KW-0150">Chloroplast</keyword>
<keyword id="KW-0472">Membrane</keyword>
<keyword id="KW-0520">NAD</keyword>
<keyword id="KW-0521">NADP</keyword>
<keyword id="KW-0934">Plastid</keyword>
<keyword id="KW-0618">Plastoquinone</keyword>
<keyword id="KW-0874">Quinone</keyword>
<keyword id="KW-0793">Thylakoid</keyword>
<keyword id="KW-1278">Translocase</keyword>
<keyword id="KW-0812">Transmembrane</keyword>
<keyword id="KW-1133">Transmembrane helix</keyword>
<keyword id="KW-0813">Transport</keyword>
<feature type="chain" id="PRO_0000362837" description="NAD(P)H-quinone oxidoreductase subunit 3, chloroplastic">
    <location>
        <begin position="1"/>
        <end position="120"/>
    </location>
</feature>
<feature type="transmembrane region" description="Helical" evidence="1">
    <location>
        <begin position="9"/>
        <end position="29"/>
    </location>
</feature>
<feature type="transmembrane region" description="Helical" evidence="1">
    <location>
        <begin position="64"/>
        <end position="84"/>
    </location>
</feature>
<feature type="transmembrane region" description="Helical" evidence="1">
    <location>
        <begin position="88"/>
        <end position="108"/>
    </location>
</feature>
<organism>
    <name type="scientific">Helianthus annuus</name>
    <name type="common">Common sunflower</name>
    <dbReference type="NCBI Taxonomy" id="4232"/>
    <lineage>
        <taxon>Eukaryota</taxon>
        <taxon>Viridiplantae</taxon>
        <taxon>Streptophyta</taxon>
        <taxon>Embryophyta</taxon>
        <taxon>Tracheophyta</taxon>
        <taxon>Spermatophyta</taxon>
        <taxon>Magnoliopsida</taxon>
        <taxon>eudicotyledons</taxon>
        <taxon>Gunneridae</taxon>
        <taxon>Pentapetalae</taxon>
        <taxon>asterids</taxon>
        <taxon>campanulids</taxon>
        <taxon>Asterales</taxon>
        <taxon>Asteraceae</taxon>
        <taxon>Asteroideae</taxon>
        <taxon>Heliantheae alliance</taxon>
        <taxon>Heliantheae</taxon>
        <taxon>Helianthus</taxon>
    </lineage>
</organism>
<evidence type="ECO:0000255" key="1">
    <source>
        <dbReference type="HAMAP-Rule" id="MF_01394"/>
    </source>
</evidence>
<name>NU3C_HELAN</name>
<accession>Q1KXV4</accession>
<gene>
    <name evidence="1" type="primary">ndhC</name>
</gene>
<sequence>MFLLYEYDIFWAFLIISSLIPILVFFISGFLAPSSKGPEKLSSYESGIEPIGDAWLQFRIRYYMFALVFVVFDVETVFLYPWAMSFDVLGVSVFVEALIFVLILIVGLVYAWRKGALEWS</sequence>
<proteinExistence type="inferred from homology"/>
<geneLocation type="chloroplast"/>
<dbReference type="EC" id="7.1.1.-" evidence="1"/>
<dbReference type="EMBL" id="DQ383815">
    <property type="protein sequence ID" value="ABD47151.1"/>
    <property type="molecule type" value="Genomic_DNA"/>
</dbReference>
<dbReference type="RefSeq" id="YP_588122.1">
    <property type="nucleotide sequence ID" value="NC_007977.1"/>
</dbReference>
<dbReference type="SMR" id="Q1KXV4"/>
<dbReference type="EnsemblPlants" id="mRNA:HanXRQr2_Chr02g0061511">
    <property type="protein sequence ID" value="CDS:HanXRQr2_Chr02g0061511.1"/>
    <property type="gene ID" value="HanXRQr2_Chr02g0061511"/>
</dbReference>
<dbReference type="GeneID" id="4055703"/>
<dbReference type="Gramene" id="mRNA:HanXRQr2_Chr02g0061511">
    <property type="protein sequence ID" value="CDS:HanXRQr2_Chr02g0061511.1"/>
    <property type="gene ID" value="HanXRQr2_Chr02g0061511"/>
</dbReference>
<dbReference type="KEGG" id="han:4055703"/>
<dbReference type="OrthoDB" id="154075at2759"/>
<dbReference type="PhylomeDB" id="Q1KXV4"/>
<dbReference type="GO" id="GO:0009535">
    <property type="term" value="C:chloroplast thylakoid membrane"/>
    <property type="evidence" value="ECO:0007669"/>
    <property type="project" value="UniProtKB-SubCell"/>
</dbReference>
<dbReference type="GO" id="GO:0008137">
    <property type="term" value="F:NADH dehydrogenase (ubiquinone) activity"/>
    <property type="evidence" value="ECO:0007669"/>
    <property type="project" value="InterPro"/>
</dbReference>
<dbReference type="GO" id="GO:0048038">
    <property type="term" value="F:quinone binding"/>
    <property type="evidence" value="ECO:0007669"/>
    <property type="project" value="UniProtKB-KW"/>
</dbReference>
<dbReference type="GO" id="GO:0019684">
    <property type="term" value="P:photosynthesis, light reaction"/>
    <property type="evidence" value="ECO:0007669"/>
    <property type="project" value="UniProtKB-UniRule"/>
</dbReference>
<dbReference type="FunFam" id="1.20.58.1610:FF:000001">
    <property type="entry name" value="NAD(P)H-quinone oxidoreductase subunit 3, chloroplastic"/>
    <property type="match status" value="1"/>
</dbReference>
<dbReference type="Gene3D" id="1.20.58.1610">
    <property type="entry name" value="NADH:ubiquinone/plastoquinone oxidoreductase, chain 3"/>
    <property type="match status" value="1"/>
</dbReference>
<dbReference type="HAMAP" id="MF_01394">
    <property type="entry name" value="NDH1_NuoA"/>
    <property type="match status" value="1"/>
</dbReference>
<dbReference type="InterPro" id="IPR023043">
    <property type="entry name" value="NAD(P)H_OxRDtase_bac/plastid"/>
</dbReference>
<dbReference type="InterPro" id="IPR000440">
    <property type="entry name" value="NADH_UbQ/plastoQ_OxRdtase_su3"/>
</dbReference>
<dbReference type="InterPro" id="IPR038430">
    <property type="entry name" value="NDAH_ubi_oxred_su3_sf"/>
</dbReference>
<dbReference type="PANTHER" id="PTHR11058">
    <property type="entry name" value="NADH-UBIQUINONE OXIDOREDUCTASE CHAIN 3"/>
    <property type="match status" value="1"/>
</dbReference>
<dbReference type="PANTHER" id="PTHR11058:SF9">
    <property type="entry name" value="NADH-UBIQUINONE OXIDOREDUCTASE CHAIN 3"/>
    <property type="match status" value="1"/>
</dbReference>
<dbReference type="Pfam" id="PF00507">
    <property type="entry name" value="Oxidored_q4"/>
    <property type="match status" value="1"/>
</dbReference>
<comment type="function">
    <text evidence="1">NDH shuttles electrons from NAD(P)H:plastoquinone, via FMN and iron-sulfur (Fe-S) centers, to quinones in the photosynthetic chain and possibly in a chloroplast respiratory chain. The immediate electron acceptor for the enzyme in this species is believed to be plastoquinone. Couples the redox reaction to proton translocation, and thus conserves the redox energy in a proton gradient.</text>
</comment>
<comment type="catalytic activity">
    <reaction evidence="1">
        <text>a plastoquinone + NADH + (n+1) H(+)(in) = a plastoquinol + NAD(+) + n H(+)(out)</text>
        <dbReference type="Rhea" id="RHEA:42608"/>
        <dbReference type="Rhea" id="RHEA-COMP:9561"/>
        <dbReference type="Rhea" id="RHEA-COMP:9562"/>
        <dbReference type="ChEBI" id="CHEBI:15378"/>
        <dbReference type="ChEBI" id="CHEBI:17757"/>
        <dbReference type="ChEBI" id="CHEBI:57540"/>
        <dbReference type="ChEBI" id="CHEBI:57945"/>
        <dbReference type="ChEBI" id="CHEBI:62192"/>
    </reaction>
</comment>
<comment type="catalytic activity">
    <reaction evidence="1">
        <text>a plastoquinone + NADPH + (n+1) H(+)(in) = a plastoquinol + NADP(+) + n H(+)(out)</text>
        <dbReference type="Rhea" id="RHEA:42612"/>
        <dbReference type="Rhea" id="RHEA-COMP:9561"/>
        <dbReference type="Rhea" id="RHEA-COMP:9562"/>
        <dbReference type="ChEBI" id="CHEBI:15378"/>
        <dbReference type="ChEBI" id="CHEBI:17757"/>
        <dbReference type="ChEBI" id="CHEBI:57783"/>
        <dbReference type="ChEBI" id="CHEBI:58349"/>
        <dbReference type="ChEBI" id="CHEBI:62192"/>
    </reaction>
</comment>
<comment type="subunit">
    <text evidence="1">NDH is composed of at least 16 different subunits, 5 of which are encoded in the nucleus.</text>
</comment>
<comment type="subcellular location">
    <subcellularLocation>
        <location evidence="1">Plastid</location>
        <location evidence="1">Chloroplast thylakoid membrane</location>
        <topology evidence="1">Multi-pass membrane protein</topology>
    </subcellularLocation>
</comment>
<comment type="similarity">
    <text evidence="1">Belongs to the complex I subunit 3 family.</text>
</comment>
<reference key="1">
    <citation type="submission" date="2006-01" db="EMBL/GenBank/DDBJ databases">
        <title>A comparison of the first two published chloroplast genomes in Asteraceae: Lactuca and Helianthus.</title>
        <authorList>
            <person name="Timme R.E."/>
            <person name="Kuehl J.V."/>
            <person name="Boore J.L."/>
            <person name="Jansen R.K."/>
        </authorList>
    </citation>
    <scope>NUCLEOTIDE SEQUENCE [LARGE SCALE GENOMIC DNA]</scope>
    <source>
        <strain>cv. HA383</strain>
    </source>
</reference>